<comment type="function">
    <text evidence="1">Catalyzes the reversible transfer of the terminal phosphate group between ATP and AMP. Plays an important role in cellular energy homeostasis and in adenine nucleotide metabolism.</text>
</comment>
<comment type="catalytic activity">
    <reaction evidence="1">
        <text>AMP + ATP = 2 ADP</text>
        <dbReference type="Rhea" id="RHEA:12973"/>
        <dbReference type="ChEBI" id="CHEBI:30616"/>
        <dbReference type="ChEBI" id="CHEBI:456215"/>
        <dbReference type="ChEBI" id="CHEBI:456216"/>
        <dbReference type="EC" id="2.7.4.3"/>
    </reaction>
</comment>
<comment type="pathway">
    <text evidence="1">Purine metabolism; AMP biosynthesis via salvage pathway; AMP from ADP: step 1/1.</text>
</comment>
<comment type="subunit">
    <text evidence="1">Monomer.</text>
</comment>
<comment type="subcellular location">
    <subcellularLocation>
        <location evidence="1">Cytoplasm</location>
    </subcellularLocation>
</comment>
<comment type="domain">
    <text evidence="1">Consists of three domains, a large central CORE domain and two small peripheral domains, NMPbind and LID, which undergo movements during catalysis. The LID domain closes over the site of phosphoryl transfer upon ATP binding. Assembling and dissambling the active center during each catalytic cycle provides an effective means to prevent ATP hydrolysis. Some bacteria have evolved a zinc-coordinating structure that stabilizes the LID domain.</text>
</comment>
<comment type="similarity">
    <text evidence="1">Belongs to the adenylate kinase family.</text>
</comment>
<reference key="1">
    <citation type="submission" date="2008-02" db="EMBL/GenBank/DDBJ databases">
        <title>Genome sequence of Ureaplasma parvum serovar 3.</title>
        <authorList>
            <person name="Methe B.A."/>
            <person name="Glass J."/>
            <person name="Waites K."/>
            <person name="Shrivastava S."/>
        </authorList>
    </citation>
    <scope>NUCLEOTIDE SEQUENCE [LARGE SCALE GENOMIC DNA]</scope>
    <source>
        <strain>ATCC 27815 / 27 / NCTC 11736</strain>
    </source>
</reference>
<feature type="chain" id="PRO_1000078294" description="Adenylate kinase">
    <location>
        <begin position="1"/>
        <end position="213"/>
    </location>
</feature>
<feature type="region of interest" description="NMP" evidence="1">
    <location>
        <begin position="30"/>
        <end position="60"/>
    </location>
</feature>
<feature type="region of interest" description="LID" evidence="1">
    <location>
        <begin position="123"/>
        <end position="160"/>
    </location>
</feature>
<feature type="binding site" evidence="1">
    <location>
        <begin position="10"/>
        <end position="15"/>
    </location>
    <ligand>
        <name>ATP</name>
        <dbReference type="ChEBI" id="CHEBI:30616"/>
    </ligand>
</feature>
<feature type="binding site" evidence="1">
    <location>
        <position position="31"/>
    </location>
    <ligand>
        <name>AMP</name>
        <dbReference type="ChEBI" id="CHEBI:456215"/>
    </ligand>
</feature>
<feature type="binding site" evidence="1">
    <location>
        <position position="36"/>
    </location>
    <ligand>
        <name>AMP</name>
        <dbReference type="ChEBI" id="CHEBI:456215"/>
    </ligand>
</feature>
<feature type="binding site" evidence="1">
    <location>
        <begin position="58"/>
        <end position="60"/>
    </location>
    <ligand>
        <name>AMP</name>
        <dbReference type="ChEBI" id="CHEBI:456215"/>
    </ligand>
</feature>
<feature type="binding site" evidence="1">
    <location>
        <begin position="87"/>
        <end position="90"/>
    </location>
    <ligand>
        <name>AMP</name>
        <dbReference type="ChEBI" id="CHEBI:456215"/>
    </ligand>
</feature>
<feature type="binding site" evidence="1">
    <location>
        <position position="94"/>
    </location>
    <ligand>
        <name>AMP</name>
        <dbReference type="ChEBI" id="CHEBI:456215"/>
    </ligand>
</feature>
<feature type="binding site" evidence="1">
    <location>
        <position position="124"/>
    </location>
    <ligand>
        <name>ATP</name>
        <dbReference type="ChEBI" id="CHEBI:30616"/>
    </ligand>
</feature>
<feature type="binding site" evidence="1">
    <location>
        <position position="127"/>
    </location>
    <ligand>
        <name>Zn(2+)</name>
        <dbReference type="ChEBI" id="CHEBI:29105"/>
        <note>structural</note>
    </ligand>
</feature>
<feature type="binding site" evidence="1">
    <location>
        <position position="130"/>
    </location>
    <ligand>
        <name>Zn(2+)</name>
        <dbReference type="ChEBI" id="CHEBI:29105"/>
        <note>structural</note>
    </ligand>
</feature>
<feature type="binding site" evidence="1">
    <location>
        <begin position="133"/>
        <end position="134"/>
    </location>
    <ligand>
        <name>ATP</name>
        <dbReference type="ChEBI" id="CHEBI:30616"/>
    </ligand>
</feature>
<feature type="binding site" evidence="1">
    <location>
        <position position="147"/>
    </location>
    <ligand>
        <name>Zn(2+)</name>
        <dbReference type="ChEBI" id="CHEBI:29105"/>
        <note>structural</note>
    </ligand>
</feature>
<feature type="binding site" evidence="1">
    <location>
        <position position="150"/>
    </location>
    <ligand>
        <name>Zn(2+)</name>
        <dbReference type="ChEBI" id="CHEBI:29105"/>
        <note>structural</note>
    </ligand>
</feature>
<feature type="binding site" evidence="1">
    <location>
        <position position="157"/>
    </location>
    <ligand>
        <name>AMP</name>
        <dbReference type="ChEBI" id="CHEBI:456215"/>
    </ligand>
</feature>
<feature type="binding site" evidence="1">
    <location>
        <position position="168"/>
    </location>
    <ligand>
        <name>AMP</name>
        <dbReference type="ChEBI" id="CHEBI:456215"/>
    </ligand>
</feature>
<feature type="binding site" evidence="1">
    <location>
        <position position="196"/>
    </location>
    <ligand>
        <name>ATP</name>
        <dbReference type="ChEBI" id="CHEBI:30616"/>
    </ligand>
</feature>
<protein>
    <recommendedName>
        <fullName evidence="1">Adenylate kinase</fullName>
        <shortName evidence="1">AK</shortName>
        <ecNumber evidence="1">2.7.4.3</ecNumber>
    </recommendedName>
    <alternativeName>
        <fullName evidence="1">ATP-AMP transphosphorylase</fullName>
    </alternativeName>
    <alternativeName>
        <fullName evidence="1">ATP:AMP phosphotransferase</fullName>
    </alternativeName>
    <alternativeName>
        <fullName evidence="1">Adenylate monophosphate kinase</fullName>
    </alternativeName>
</protein>
<keyword id="KW-0067">ATP-binding</keyword>
<keyword id="KW-0963">Cytoplasm</keyword>
<keyword id="KW-0418">Kinase</keyword>
<keyword id="KW-0479">Metal-binding</keyword>
<keyword id="KW-0545">Nucleotide biosynthesis</keyword>
<keyword id="KW-0547">Nucleotide-binding</keyword>
<keyword id="KW-0808">Transferase</keyword>
<keyword id="KW-0862">Zinc</keyword>
<evidence type="ECO:0000255" key="1">
    <source>
        <dbReference type="HAMAP-Rule" id="MF_00235"/>
    </source>
</evidence>
<proteinExistence type="inferred from homology"/>
<accession>B1AIP0</accession>
<sequence>MKILLIGPPGSGKGSVSELLTKNNTLKHVSTGNLFRAILKEDSELARKIKEINVSGGKLVPDEITNQVAKSAIDELIKNEQSFILDGYPRTINQALALEQYCNLDYIFYLDIDHQELMKRLTGRWMCPKCAGIYNIHFKKPQVHGLCDNDQATLYQRADDHADAVSIRLDEYDKLTLPLIKHYETNPRFIKINANQPIEDVYKNINNYLKQNK</sequence>
<name>KAD_UREP2</name>
<organism>
    <name type="scientific">Ureaplasma parvum serovar 3 (strain ATCC 27815 / 27 / NCTC 11736)</name>
    <dbReference type="NCBI Taxonomy" id="505682"/>
    <lineage>
        <taxon>Bacteria</taxon>
        <taxon>Bacillati</taxon>
        <taxon>Mycoplasmatota</taxon>
        <taxon>Mycoplasmoidales</taxon>
        <taxon>Mycoplasmoidaceae</taxon>
        <taxon>Ureaplasma</taxon>
    </lineage>
</organism>
<gene>
    <name evidence="1" type="primary">adk</name>
    <name type="ordered locus">UPA3_0259</name>
</gene>
<dbReference type="EC" id="2.7.4.3" evidence="1"/>
<dbReference type="EMBL" id="CP000942">
    <property type="protein sequence ID" value="ACA33032.1"/>
    <property type="molecule type" value="Genomic_DNA"/>
</dbReference>
<dbReference type="RefSeq" id="WP_006688832.1">
    <property type="nucleotide sequence ID" value="NC_010503.1"/>
</dbReference>
<dbReference type="SMR" id="B1AIP0"/>
<dbReference type="GeneID" id="29672664"/>
<dbReference type="KEGG" id="upa:UPA3_0259"/>
<dbReference type="HOGENOM" id="CLU_032354_1_2_14"/>
<dbReference type="UniPathway" id="UPA00588">
    <property type="reaction ID" value="UER00649"/>
</dbReference>
<dbReference type="Proteomes" id="UP000002162">
    <property type="component" value="Chromosome"/>
</dbReference>
<dbReference type="GO" id="GO:0005737">
    <property type="term" value="C:cytoplasm"/>
    <property type="evidence" value="ECO:0007669"/>
    <property type="project" value="UniProtKB-SubCell"/>
</dbReference>
<dbReference type="GO" id="GO:0004017">
    <property type="term" value="F:adenylate kinase activity"/>
    <property type="evidence" value="ECO:0007669"/>
    <property type="project" value="UniProtKB-UniRule"/>
</dbReference>
<dbReference type="GO" id="GO:0005524">
    <property type="term" value="F:ATP binding"/>
    <property type="evidence" value="ECO:0007669"/>
    <property type="project" value="UniProtKB-UniRule"/>
</dbReference>
<dbReference type="GO" id="GO:0008270">
    <property type="term" value="F:zinc ion binding"/>
    <property type="evidence" value="ECO:0007669"/>
    <property type="project" value="UniProtKB-UniRule"/>
</dbReference>
<dbReference type="GO" id="GO:0044209">
    <property type="term" value="P:AMP salvage"/>
    <property type="evidence" value="ECO:0007669"/>
    <property type="project" value="UniProtKB-UniRule"/>
</dbReference>
<dbReference type="CDD" id="cd01428">
    <property type="entry name" value="ADK"/>
    <property type="match status" value="1"/>
</dbReference>
<dbReference type="Gene3D" id="3.40.50.300">
    <property type="entry name" value="P-loop containing nucleotide triphosphate hydrolases"/>
    <property type="match status" value="1"/>
</dbReference>
<dbReference type="HAMAP" id="MF_00235">
    <property type="entry name" value="Adenylate_kinase_Adk"/>
    <property type="match status" value="1"/>
</dbReference>
<dbReference type="InterPro" id="IPR006259">
    <property type="entry name" value="Adenyl_kin_sub"/>
</dbReference>
<dbReference type="InterPro" id="IPR000850">
    <property type="entry name" value="Adenylat/UMP-CMP_kin"/>
</dbReference>
<dbReference type="InterPro" id="IPR033690">
    <property type="entry name" value="Adenylat_kinase_CS"/>
</dbReference>
<dbReference type="InterPro" id="IPR007862">
    <property type="entry name" value="Adenylate_kinase_lid-dom"/>
</dbReference>
<dbReference type="InterPro" id="IPR036193">
    <property type="entry name" value="ADK_active_lid_dom_sf"/>
</dbReference>
<dbReference type="InterPro" id="IPR027417">
    <property type="entry name" value="P-loop_NTPase"/>
</dbReference>
<dbReference type="NCBIfam" id="TIGR01351">
    <property type="entry name" value="adk"/>
    <property type="match status" value="1"/>
</dbReference>
<dbReference type="PANTHER" id="PTHR23359">
    <property type="entry name" value="NUCLEOTIDE KINASE"/>
    <property type="match status" value="1"/>
</dbReference>
<dbReference type="Pfam" id="PF00406">
    <property type="entry name" value="ADK"/>
    <property type="match status" value="1"/>
</dbReference>
<dbReference type="Pfam" id="PF05191">
    <property type="entry name" value="ADK_lid"/>
    <property type="match status" value="1"/>
</dbReference>
<dbReference type="PRINTS" id="PR00094">
    <property type="entry name" value="ADENYLTKNASE"/>
</dbReference>
<dbReference type="SUPFAM" id="SSF57774">
    <property type="entry name" value="Microbial and mitochondrial ADK, insert 'zinc finger' domain"/>
    <property type="match status" value="1"/>
</dbReference>
<dbReference type="SUPFAM" id="SSF52540">
    <property type="entry name" value="P-loop containing nucleoside triphosphate hydrolases"/>
    <property type="match status" value="1"/>
</dbReference>
<dbReference type="PROSITE" id="PS00113">
    <property type="entry name" value="ADENYLATE_KINASE"/>
    <property type="match status" value="1"/>
</dbReference>